<proteinExistence type="predicted"/>
<reference key="1">
    <citation type="journal article" date="1995" name="Nucleic Acids Res.">
        <title>Analysis of the Escherichia coli genome VI: DNA sequence of the region from 92.8 through 100 minutes.</title>
        <authorList>
            <person name="Burland V.D."/>
            <person name="Plunkett G. III"/>
            <person name="Sofia H.J."/>
            <person name="Daniels D.L."/>
            <person name="Blattner F.R."/>
        </authorList>
    </citation>
    <scope>NUCLEOTIDE SEQUENCE [LARGE SCALE GENOMIC DNA]</scope>
    <source>
        <strain>K12 / MG1655 / ATCC 47076</strain>
    </source>
</reference>
<reference key="2">
    <citation type="journal article" date="1997" name="Science">
        <title>The complete genome sequence of Escherichia coli K-12.</title>
        <authorList>
            <person name="Blattner F.R."/>
            <person name="Plunkett G. III"/>
            <person name="Bloch C.A."/>
            <person name="Perna N.T."/>
            <person name="Burland V."/>
            <person name="Riley M."/>
            <person name="Collado-Vides J."/>
            <person name="Glasner J.D."/>
            <person name="Rode C.K."/>
            <person name="Mayhew G.F."/>
            <person name="Gregor J."/>
            <person name="Davis N.W."/>
            <person name="Kirkpatrick H.A."/>
            <person name="Goeden M.A."/>
            <person name="Rose D.J."/>
            <person name="Mau B."/>
            <person name="Shao Y."/>
        </authorList>
    </citation>
    <scope>NUCLEOTIDE SEQUENCE [LARGE SCALE GENOMIC DNA]</scope>
    <source>
        <strain>K12 / MG1655 / ATCC 47076</strain>
    </source>
</reference>
<reference key="3">
    <citation type="journal article" date="2006" name="Mol. Syst. Biol.">
        <title>Highly accurate genome sequences of Escherichia coli K-12 strains MG1655 and W3110.</title>
        <authorList>
            <person name="Hayashi K."/>
            <person name="Morooka N."/>
            <person name="Yamamoto Y."/>
            <person name="Fujita K."/>
            <person name="Isono K."/>
            <person name="Choi S."/>
            <person name="Ohtsubo E."/>
            <person name="Baba T."/>
            <person name="Wanner B.L."/>
            <person name="Mori H."/>
            <person name="Horiuchi T."/>
        </authorList>
    </citation>
    <scope>NUCLEOTIDE SEQUENCE [LARGE SCALE GENOMIC DNA]</scope>
    <source>
        <strain>K12 / W3110 / ATCC 27325 / DSM 5911</strain>
    </source>
</reference>
<name>YJGZ_ECOLI</name>
<gene>
    <name type="primary">yjgZ</name>
    <name type="ordered locus">b4277</name>
    <name type="ordered locus">JW4236</name>
</gene>
<accession>P39351</accession>
<accession>Q2M635</accession>
<feature type="chain" id="PRO_0000169780" description="Uncharacterized protein YjgZ">
    <location>
        <begin position="1"/>
        <end position="109"/>
    </location>
</feature>
<protein>
    <recommendedName>
        <fullName>Uncharacterized protein YjgZ</fullName>
    </recommendedName>
</protein>
<dbReference type="EMBL" id="U14003">
    <property type="protein sequence ID" value="AAA97173.1"/>
    <property type="molecule type" value="Genomic_DNA"/>
</dbReference>
<dbReference type="EMBL" id="U00096">
    <property type="protein sequence ID" value="AAC77233.1"/>
    <property type="molecule type" value="Genomic_DNA"/>
</dbReference>
<dbReference type="EMBL" id="AP009048">
    <property type="protein sequence ID" value="BAE78271.1"/>
    <property type="molecule type" value="Genomic_DNA"/>
</dbReference>
<dbReference type="PIR" id="S56502">
    <property type="entry name" value="S56502"/>
</dbReference>
<dbReference type="RefSeq" id="NP_418697.1">
    <property type="nucleotide sequence ID" value="NC_000913.3"/>
</dbReference>
<dbReference type="BioGRID" id="4261458">
    <property type="interactions" value="11"/>
</dbReference>
<dbReference type="BioGRID" id="853086">
    <property type="interactions" value="6"/>
</dbReference>
<dbReference type="FunCoup" id="P39351">
    <property type="interactions" value="220"/>
</dbReference>
<dbReference type="IntAct" id="P39351">
    <property type="interactions" value="13"/>
</dbReference>
<dbReference type="STRING" id="511145.b4277"/>
<dbReference type="PaxDb" id="511145-b4277"/>
<dbReference type="EnsemblBacteria" id="AAC77233">
    <property type="protein sequence ID" value="AAC77233"/>
    <property type="gene ID" value="b4277"/>
</dbReference>
<dbReference type="GeneID" id="948804"/>
<dbReference type="KEGG" id="ecj:JW4236"/>
<dbReference type="KEGG" id="eco:b4277"/>
<dbReference type="PATRIC" id="fig|83333.113.peg.4402"/>
<dbReference type="EchoBASE" id="EB2487"/>
<dbReference type="eggNOG" id="ENOG5033CXM">
    <property type="taxonomic scope" value="Bacteria"/>
</dbReference>
<dbReference type="HOGENOM" id="CLU_2273112_0_0_6"/>
<dbReference type="InParanoid" id="P39351"/>
<dbReference type="BioCyc" id="EcoCyc:G7899-MONOMER"/>
<dbReference type="PRO" id="PR:P39351"/>
<dbReference type="Proteomes" id="UP000000625">
    <property type="component" value="Chromosome"/>
</dbReference>
<dbReference type="InterPro" id="IPR039552">
    <property type="entry name" value="IS66_C"/>
</dbReference>
<dbReference type="Pfam" id="PF13817">
    <property type="entry name" value="DDE_Tnp_IS66_C"/>
    <property type="match status" value="1"/>
</dbReference>
<sequence length="109" mass="12161">MLPPGPLLVLPVGARVSRGGLSPTERSCISRHTQQYLRACYPSGRYGTKGLVVRWFTGGREPRGTDNEPSGNRSLEPHAWLTDVLTRLPEWPEERLAELLPLEGFTFFG</sequence>
<organism>
    <name type="scientific">Escherichia coli (strain K12)</name>
    <dbReference type="NCBI Taxonomy" id="83333"/>
    <lineage>
        <taxon>Bacteria</taxon>
        <taxon>Pseudomonadati</taxon>
        <taxon>Pseudomonadota</taxon>
        <taxon>Gammaproteobacteria</taxon>
        <taxon>Enterobacterales</taxon>
        <taxon>Enterobacteriaceae</taxon>
        <taxon>Escherichia</taxon>
    </lineage>
</organism>
<keyword id="KW-1185">Reference proteome</keyword>